<feature type="chain" id="PRO_0000325544" description="Pantothenate kinase">
    <location>
        <begin position="1"/>
        <end position="316"/>
    </location>
</feature>
<feature type="binding site" evidence="1">
    <location>
        <begin position="96"/>
        <end position="103"/>
    </location>
    <ligand>
        <name>ATP</name>
        <dbReference type="ChEBI" id="CHEBI:30616"/>
    </ligand>
</feature>
<sequence>MTTDELTKSLEAFTHFTRAEWAQLNDGHSAPLTEKERKNLEGIYETISEAEVNDVYMPLSELLYKRMVHNVRLHDDLNRFLKRERKRVPFVIGIAGSVAVGKSTTARLIQALASRWPGSPKVELVTTDGFLYPNEVLEKRGLMKRKGFPESYDIRSLLTFLTDLKAGTPVVKAPMYSHLTYNIEKDHIQTLIEPDVVIVEGINVLQVNRKGKRMPHVFVSDFFDFSIYVDAEEKDILSWYIERFQLLRNTAFQKPESYFHRYRDLTDEEAVAMAESIWHTINGVNLEKNIKPTRLRADLILTKGAHHRVEQVQLRK</sequence>
<name>COAA_SHOC1</name>
<dbReference type="EC" id="2.7.1.33" evidence="1"/>
<dbReference type="EMBL" id="AP006627">
    <property type="protein sequence ID" value="BAD65074.1"/>
    <property type="molecule type" value="Genomic_DNA"/>
</dbReference>
<dbReference type="RefSeq" id="WP_011247382.1">
    <property type="nucleotide sequence ID" value="NC_006582.1"/>
</dbReference>
<dbReference type="SMR" id="Q5WEY6"/>
<dbReference type="STRING" id="66692.ABC2539"/>
<dbReference type="KEGG" id="bcl:ABC2539"/>
<dbReference type="eggNOG" id="COG1072">
    <property type="taxonomic scope" value="Bacteria"/>
</dbReference>
<dbReference type="HOGENOM" id="CLU_053818_1_1_9"/>
<dbReference type="OrthoDB" id="1550976at2"/>
<dbReference type="UniPathway" id="UPA00241">
    <property type="reaction ID" value="UER00352"/>
</dbReference>
<dbReference type="Proteomes" id="UP000001168">
    <property type="component" value="Chromosome"/>
</dbReference>
<dbReference type="GO" id="GO:0005737">
    <property type="term" value="C:cytoplasm"/>
    <property type="evidence" value="ECO:0007669"/>
    <property type="project" value="UniProtKB-SubCell"/>
</dbReference>
<dbReference type="GO" id="GO:0005524">
    <property type="term" value="F:ATP binding"/>
    <property type="evidence" value="ECO:0007669"/>
    <property type="project" value="UniProtKB-UniRule"/>
</dbReference>
<dbReference type="GO" id="GO:0004594">
    <property type="term" value="F:pantothenate kinase activity"/>
    <property type="evidence" value="ECO:0007669"/>
    <property type="project" value="UniProtKB-UniRule"/>
</dbReference>
<dbReference type="GO" id="GO:0015937">
    <property type="term" value="P:coenzyme A biosynthetic process"/>
    <property type="evidence" value="ECO:0007669"/>
    <property type="project" value="UniProtKB-UniRule"/>
</dbReference>
<dbReference type="CDD" id="cd02025">
    <property type="entry name" value="PanK"/>
    <property type="match status" value="1"/>
</dbReference>
<dbReference type="Gene3D" id="3.40.50.300">
    <property type="entry name" value="P-loop containing nucleotide triphosphate hydrolases"/>
    <property type="match status" value="1"/>
</dbReference>
<dbReference type="HAMAP" id="MF_00215">
    <property type="entry name" value="Pantothen_kinase_1"/>
    <property type="match status" value="1"/>
</dbReference>
<dbReference type="InterPro" id="IPR027417">
    <property type="entry name" value="P-loop_NTPase"/>
</dbReference>
<dbReference type="InterPro" id="IPR004566">
    <property type="entry name" value="PanK"/>
</dbReference>
<dbReference type="InterPro" id="IPR006083">
    <property type="entry name" value="PRK/URK"/>
</dbReference>
<dbReference type="NCBIfam" id="TIGR00554">
    <property type="entry name" value="panK_bact"/>
    <property type="match status" value="1"/>
</dbReference>
<dbReference type="PANTHER" id="PTHR10285">
    <property type="entry name" value="URIDINE KINASE"/>
    <property type="match status" value="1"/>
</dbReference>
<dbReference type="Pfam" id="PF00485">
    <property type="entry name" value="PRK"/>
    <property type="match status" value="1"/>
</dbReference>
<dbReference type="PIRSF" id="PIRSF000545">
    <property type="entry name" value="Pantothenate_kin"/>
    <property type="match status" value="1"/>
</dbReference>
<dbReference type="SUPFAM" id="SSF52540">
    <property type="entry name" value="P-loop containing nucleoside triphosphate hydrolases"/>
    <property type="match status" value="1"/>
</dbReference>
<gene>
    <name evidence="1" type="primary">coaA</name>
    <name type="ordered locus">ABC2539</name>
</gene>
<accession>Q5WEY6</accession>
<protein>
    <recommendedName>
        <fullName evidence="1">Pantothenate kinase</fullName>
        <ecNumber evidence="1">2.7.1.33</ecNumber>
    </recommendedName>
    <alternativeName>
        <fullName evidence="1">Pantothenic acid kinase</fullName>
    </alternativeName>
</protein>
<proteinExistence type="inferred from homology"/>
<keyword id="KW-0067">ATP-binding</keyword>
<keyword id="KW-0173">Coenzyme A biosynthesis</keyword>
<keyword id="KW-0963">Cytoplasm</keyword>
<keyword id="KW-0418">Kinase</keyword>
<keyword id="KW-0547">Nucleotide-binding</keyword>
<keyword id="KW-1185">Reference proteome</keyword>
<keyword id="KW-0808">Transferase</keyword>
<comment type="catalytic activity">
    <reaction evidence="1">
        <text>(R)-pantothenate + ATP = (R)-4'-phosphopantothenate + ADP + H(+)</text>
        <dbReference type="Rhea" id="RHEA:16373"/>
        <dbReference type="ChEBI" id="CHEBI:10986"/>
        <dbReference type="ChEBI" id="CHEBI:15378"/>
        <dbReference type="ChEBI" id="CHEBI:29032"/>
        <dbReference type="ChEBI" id="CHEBI:30616"/>
        <dbReference type="ChEBI" id="CHEBI:456216"/>
        <dbReference type="EC" id="2.7.1.33"/>
    </reaction>
</comment>
<comment type="pathway">
    <text evidence="1">Cofactor biosynthesis; coenzyme A biosynthesis; CoA from (R)-pantothenate: step 1/5.</text>
</comment>
<comment type="subcellular location">
    <subcellularLocation>
        <location evidence="1">Cytoplasm</location>
    </subcellularLocation>
</comment>
<comment type="similarity">
    <text evidence="1">Belongs to the prokaryotic pantothenate kinase family.</text>
</comment>
<organism>
    <name type="scientific">Shouchella clausii (strain KSM-K16)</name>
    <name type="common">Alkalihalobacillus clausii</name>
    <dbReference type="NCBI Taxonomy" id="66692"/>
    <lineage>
        <taxon>Bacteria</taxon>
        <taxon>Bacillati</taxon>
        <taxon>Bacillota</taxon>
        <taxon>Bacilli</taxon>
        <taxon>Bacillales</taxon>
        <taxon>Bacillaceae</taxon>
        <taxon>Shouchella</taxon>
    </lineage>
</organism>
<evidence type="ECO:0000255" key="1">
    <source>
        <dbReference type="HAMAP-Rule" id="MF_00215"/>
    </source>
</evidence>
<reference key="1">
    <citation type="submission" date="2003-10" db="EMBL/GenBank/DDBJ databases">
        <title>The complete genome sequence of the alkaliphilic Bacillus clausii KSM-K16.</title>
        <authorList>
            <person name="Takaki Y."/>
            <person name="Kageyama Y."/>
            <person name="Shimamura S."/>
            <person name="Suzuki H."/>
            <person name="Nishi S."/>
            <person name="Hatada Y."/>
            <person name="Kawai S."/>
            <person name="Ito S."/>
            <person name="Horikoshi K."/>
        </authorList>
    </citation>
    <scope>NUCLEOTIDE SEQUENCE [LARGE SCALE GENOMIC DNA]</scope>
    <source>
        <strain>KSM-K16</strain>
    </source>
</reference>